<organism>
    <name type="scientific">Methylorubrum extorquens (strain CM4 / NCIMB 13688)</name>
    <name type="common">Methylobacterium extorquens</name>
    <dbReference type="NCBI Taxonomy" id="440085"/>
    <lineage>
        <taxon>Bacteria</taxon>
        <taxon>Pseudomonadati</taxon>
        <taxon>Pseudomonadota</taxon>
        <taxon>Alphaproteobacteria</taxon>
        <taxon>Hyphomicrobiales</taxon>
        <taxon>Methylobacteriaceae</taxon>
        <taxon>Methylorubrum</taxon>
    </lineage>
</organism>
<name>RL34_METC4</name>
<protein>
    <recommendedName>
        <fullName evidence="1">Large ribosomal subunit protein bL34</fullName>
    </recommendedName>
    <alternativeName>
        <fullName evidence="2">50S ribosomal protein L34</fullName>
    </alternativeName>
</protein>
<accession>B7L2I7</accession>
<proteinExistence type="inferred from homology"/>
<gene>
    <name evidence="1" type="primary">rpmH</name>
    <name type="ordered locus">Mchl_2632</name>
</gene>
<comment type="similarity">
    <text evidence="1">Belongs to the bacterial ribosomal protein bL34 family.</text>
</comment>
<keyword id="KW-0687">Ribonucleoprotein</keyword>
<keyword id="KW-0689">Ribosomal protein</keyword>
<sequence>MKRTYQPSKLVRKRRHGFRARMATAGGRKVIAARRAHGRKRLSA</sequence>
<evidence type="ECO:0000255" key="1">
    <source>
        <dbReference type="HAMAP-Rule" id="MF_00391"/>
    </source>
</evidence>
<evidence type="ECO:0000305" key="2"/>
<dbReference type="EMBL" id="CP001298">
    <property type="protein sequence ID" value="ACK83472.1"/>
    <property type="molecule type" value="Genomic_DNA"/>
</dbReference>
<dbReference type="RefSeq" id="WP_012253788.1">
    <property type="nucleotide sequence ID" value="NC_011757.1"/>
</dbReference>
<dbReference type="SMR" id="B7L2I7"/>
<dbReference type="GeneID" id="72990038"/>
<dbReference type="KEGG" id="mch:Mchl_2632"/>
<dbReference type="HOGENOM" id="CLU_129938_2_0_5"/>
<dbReference type="Proteomes" id="UP000002385">
    <property type="component" value="Chromosome"/>
</dbReference>
<dbReference type="GO" id="GO:1990904">
    <property type="term" value="C:ribonucleoprotein complex"/>
    <property type="evidence" value="ECO:0007669"/>
    <property type="project" value="UniProtKB-KW"/>
</dbReference>
<dbReference type="GO" id="GO:0005840">
    <property type="term" value="C:ribosome"/>
    <property type="evidence" value="ECO:0007669"/>
    <property type="project" value="UniProtKB-KW"/>
</dbReference>
<dbReference type="GO" id="GO:0003735">
    <property type="term" value="F:structural constituent of ribosome"/>
    <property type="evidence" value="ECO:0007669"/>
    <property type="project" value="InterPro"/>
</dbReference>
<dbReference type="GO" id="GO:0006412">
    <property type="term" value="P:translation"/>
    <property type="evidence" value="ECO:0007669"/>
    <property type="project" value="UniProtKB-UniRule"/>
</dbReference>
<dbReference type="FunFam" id="1.10.287.3980:FF:000001">
    <property type="entry name" value="Mitochondrial ribosomal protein L34"/>
    <property type="match status" value="1"/>
</dbReference>
<dbReference type="Gene3D" id="1.10.287.3980">
    <property type="match status" value="1"/>
</dbReference>
<dbReference type="HAMAP" id="MF_00391">
    <property type="entry name" value="Ribosomal_bL34"/>
    <property type="match status" value="1"/>
</dbReference>
<dbReference type="InterPro" id="IPR000271">
    <property type="entry name" value="Ribosomal_bL34"/>
</dbReference>
<dbReference type="InterPro" id="IPR020939">
    <property type="entry name" value="Ribosomal_bL34_CS"/>
</dbReference>
<dbReference type="NCBIfam" id="TIGR01030">
    <property type="entry name" value="rpmH_bact"/>
    <property type="match status" value="1"/>
</dbReference>
<dbReference type="PANTHER" id="PTHR14503:SF4">
    <property type="entry name" value="LARGE RIBOSOMAL SUBUNIT PROTEIN BL34M"/>
    <property type="match status" value="1"/>
</dbReference>
<dbReference type="PANTHER" id="PTHR14503">
    <property type="entry name" value="MITOCHONDRIAL RIBOSOMAL PROTEIN 34 FAMILY MEMBER"/>
    <property type="match status" value="1"/>
</dbReference>
<dbReference type="Pfam" id="PF00468">
    <property type="entry name" value="Ribosomal_L34"/>
    <property type="match status" value="1"/>
</dbReference>
<dbReference type="PROSITE" id="PS00784">
    <property type="entry name" value="RIBOSOMAL_L34"/>
    <property type="match status" value="1"/>
</dbReference>
<feature type="chain" id="PRO_1000134448" description="Large ribosomal subunit protein bL34">
    <location>
        <begin position="1"/>
        <end position="44"/>
    </location>
</feature>
<reference key="1">
    <citation type="submission" date="2008-12" db="EMBL/GenBank/DDBJ databases">
        <title>Complete sequence of chromosome of Methylobacterium chloromethanicum CM4.</title>
        <authorList>
            <consortium name="US DOE Joint Genome Institute"/>
            <person name="Lucas S."/>
            <person name="Copeland A."/>
            <person name="Lapidus A."/>
            <person name="Glavina del Rio T."/>
            <person name="Dalin E."/>
            <person name="Tice H."/>
            <person name="Bruce D."/>
            <person name="Goodwin L."/>
            <person name="Pitluck S."/>
            <person name="Chertkov O."/>
            <person name="Brettin T."/>
            <person name="Detter J.C."/>
            <person name="Han C."/>
            <person name="Larimer F."/>
            <person name="Land M."/>
            <person name="Hauser L."/>
            <person name="Kyrpides N."/>
            <person name="Mikhailova N."/>
            <person name="Marx C."/>
            <person name="Richardson P."/>
        </authorList>
    </citation>
    <scope>NUCLEOTIDE SEQUENCE [LARGE SCALE GENOMIC DNA]</scope>
    <source>
        <strain>CM4 / NCIMB 13688</strain>
    </source>
</reference>